<comment type="function">
    <text>Part of the binding-protein-dependent transport system for maltodextrin; probably responsible for the translocation of the substrate across the membrane.</text>
</comment>
<comment type="subcellular location">
    <subcellularLocation>
        <location>Cell membrane</location>
        <topology>Multi-pass membrane protein</topology>
    </subcellularLocation>
</comment>
<comment type="similarity">
    <text evidence="2">Belongs to the binding-protein-dependent transport system permease family. MalFG subfamily.</text>
</comment>
<comment type="sequence caution" evidence="2">
    <conflict type="erroneous initiation">
        <sequence resource="EMBL-CDS" id="AAA26926"/>
    </conflict>
</comment>
<proteinExistence type="inferred from homology"/>
<name>MALC_STRPN</name>
<evidence type="ECO:0000255" key="1">
    <source>
        <dbReference type="PROSITE-ProRule" id="PRU00441"/>
    </source>
</evidence>
<evidence type="ECO:0000305" key="2"/>
<keyword id="KW-1003">Cell membrane</keyword>
<keyword id="KW-0472">Membrane</keyword>
<keyword id="KW-1185">Reference proteome</keyword>
<keyword id="KW-0762">Sugar transport</keyword>
<keyword id="KW-0812">Transmembrane</keyword>
<keyword id="KW-1133">Transmembrane helix</keyword>
<keyword id="KW-0813">Transport</keyword>
<accession>P0A4N1</accession>
<accession>Q04698</accession>
<organism>
    <name type="scientific">Streptococcus pneumoniae serotype 4 (strain ATCC BAA-334 / TIGR4)</name>
    <dbReference type="NCBI Taxonomy" id="170187"/>
    <lineage>
        <taxon>Bacteria</taxon>
        <taxon>Bacillati</taxon>
        <taxon>Bacillota</taxon>
        <taxon>Bacilli</taxon>
        <taxon>Lactobacillales</taxon>
        <taxon>Streptococcaceae</taxon>
        <taxon>Streptococcus</taxon>
    </lineage>
</organism>
<dbReference type="EMBL" id="L08611">
    <property type="protein sequence ID" value="AAA26926.1"/>
    <property type="status" value="ALT_INIT"/>
    <property type="molecule type" value="Genomic_DNA"/>
</dbReference>
<dbReference type="EMBL" id="AE005672">
    <property type="protein sequence ID" value="AAK76168.1"/>
    <property type="molecule type" value="Genomic_DNA"/>
</dbReference>
<dbReference type="PIR" id="G95246">
    <property type="entry name" value="G95246"/>
</dbReference>
<dbReference type="SMR" id="P0A4N1"/>
<dbReference type="PaxDb" id="170187-SP_2109"/>
<dbReference type="EnsemblBacteria" id="AAK76168">
    <property type="protein sequence ID" value="AAK76168"/>
    <property type="gene ID" value="SP_2109"/>
</dbReference>
<dbReference type="KEGG" id="spn:SP_2109"/>
<dbReference type="eggNOG" id="COG1175">
    <property type="taxonomic scope" value="Bacteria"/>
</dbReference>
<dbReference type="PhylomeDB" id="P0A4N1"/>
<dbReference type="BioCyc" id="SPNE170187:G1FZB-2197-MONOMER"/>
<dbReference type="BRENDA" id="2.4.1.25">
    <property type="organism ID" value="1960"/>
</dbReference>
<dbReference type="Proteomes" id="UP000000585">
    <property type="component" value="Chromosome"/>
</dbReference>
<dbReference type="GO" id="GO:1990060">
    <property type="term" value="C:maltose transport complex"/>
    <property type="evidence" value="ECO:0007669"/>
    <property type="project" value="TreeGrafter"/>
</dbReference>
<dbReference type="GO" id="GO:0015423">
    <property type="term" value="F:ABC-type maltose transporter activity"/>
    <property type="evidence" value="ECO:0007669"/>
    <property type="project" value="TreeGrafter"/>
</dbReference>
<dbReference type="GO" id="GO:0042956">
    <property type="term" value="P:maltodextrin transmembrane transport"/>
    <property type="evidence" value="ECO:0007669"/>
    <property type="project" value="TreeGrafter"/>
</dbReference>
<dbReference type="CDD" id="cd06261">
    <property type="entry name" value="TM_PBP2"/>
    <property type="match status" value="1"/>
</dbReference>
<dbReference type="FunFam" id="1.10.3720.10:FF:000036">
    <property type="entry name" value="Maltodextrin ABC transporter, permease protein"/>
    <property type="match status" value="1"/>
</dbReference>
<dbReference type="Gene3D" id="1.10.3720.10">
    <property type="entry name" value="MetI-like"/>
    <property type="match status" value="1"/>
</dbReference>
<dbReference type="InterPro" id="IPR000515">
    <property type="entry name" value="MetI-like"/>
</dbReference>
<dbReference type="InterPro" id="IPR035906">
    <property type="entry name" value="MetI-like_sf"/>
</dbReference>
<dbReference type="PANTHER" id="PTHR47314">
    <property type="entry name" value="MALTOSE/MALTODEXTRIN TRANSPORT SYSTEM PERMEASE PROTEIN MALF"/>
    <property type="match status" value="1"/>
</dbReference>
<dbReference type="PANTHER" id="PTHR47314:SF1">
    <property type="entry name" value="MALTOSE_MALTODEXTRIN TRANSPORT SYSTEM PERMEASE PROTEIN MALF"/>
    <property type="match status" value="1"/>
</dbReference>
<dbReference type="Pfam" id="PF00528">
    <property type="entry name" value="BPD_transp_1"/>
    <property type="match status" value="1"/>
</dbReference>
<dbReference type="SUPFAM" id="SSF160964">
    <property type="entry name" value="MalF N-terminal region-like"/>
    <property type="match status" value="1"/>
</dbReference>
<dbReference type="SUPFAM" id="SSF161098">
    <property type="entry name" value="MetI-like"/>
    <property type="match status" value="1"/>
</dbReference>
<dbReference type="PROSITE" id="PS50928">
    <property type="entry name" value="ABC_TM1"/>
    <property type="match status" value="1"/>
</dbReference>
<sequence length="435" mass="48302">MKGVNMEKQQPSKAALLSIIPGLGQIYNKQKAKGFIFLGVTIVFVLYFLALATPELSNLITLGDKPGRDNSLFMLIRGAFHLIFVIVYVLFYFSNIKDAHTIAKRINNGIPVPRTLKDMIKGIYENGFPYLLIIPSYVAMTFAIIFPVIVTLMIAFTNYDFQHLPPNKLLDWVGLTNFTNIWSLSTFRSAFGSVLSWTIIWALAASTLQIVIGIFTAIIANQPFIKGKRIFGVIFLLPWAVPAFITILTFSNMFNDSVGAINTQVLPILAKFLPFLDGALIPWKTDPTWTKIALIMMQGWLGFPYIYVLTLGILQSIPNDLYEAAYIDGANAWQKFRNITFPMILAVAAPTLISQYTFNFNNFSIMYLFNGGGPGSVGGGAGSTDILISWIYRLTTGTSPQYSMAAAVTLIISIIVISISMIAFKKLHAFDMEDV</sequence>
<protein>
    <recommendedName>
        <fullName>Maltodextrin transport system permease protein MalC</fullName>
    </recommendedName>
</protein>
<reference key="1">
    <citation type="journal article" date="1993" name="J. Mol. Biol.">
        <title>Structure of the maltodextrin-uptake locus of Streptococcus pneumoniae. Correlation to the Escherichia coli maltose regulon.</title>
        <authorList>
            <person name="Puyet A."/>
            <person name="Espinosa M."/>
        </authorList>
    </citation>
    <scope>NUCLEOTIDE SEQUENCE [GENOMIC DNA]</scope>
</reference>
<reference key="2">
    <citation type="journal article" date="2001" name="Science">
        <title>Complete genome sequence of a virulent isolate of Streptococcus pneumoniae.</title>
        <authorList>
            <person name="Tettelin H."/>
            <person name="Nelson K.E."/>
            <person name="Paulsen I.T."/>
            <person name="Eisen J.A."/>
            <person name="Read T.D."/>
            <person name="Peterson S.N."/>
            <person name="Heidelberg J.F."/>
            <person name="DeBoy R.T."/>
            <person name="Haft D.H."/>
            <person name="Dodson R.J."/>
            <person name="Durkin A.S."/>
            <person name="Gwinn M.L."/>
            <person name="Kolonay J.F."/>
            <person name="Nelson W.C."/>
            <person name="Peterson J.D."/>
            <person name="Umayam L.A."/>
            <person name="White O."/>
            <person name="Salzberg S.L."/>
            <person name="Lewis M.R."/>
            <person name="Radune D."/>
            <person name="Holtzapple E.K."/>
            <person name="Khouri H.M."/>
            <person name="Wolf A.M."/>
            <person name="Utterback T.R."/>
            <person name="Hansen C.L."/>
            <person name="McDonald L.A."/>
            <person name="Feldblyum T.V."/>
            <person name="Angiuoli S.V."/>
            <person name="Dickinson T."/>
            <person name="Hickey E.K."/>
            <person name="Holt I.E."/>
            <person name="Loftus B.J."/>
            <person name="Yang F."/>
            <person name="Smith H.O."/>
            <person name="Venter J.C."/>
            <person name="Dougherty B.A."/>
            <person name="Morrison D.A."/>
            <person name="Hollingshead S.K."/>
            <person name="Fraser C.M."/>
        </authorList>
    </citation>
    <scope>NUCLEOTIDE SEQUENCE [LARGE SCALE GENOMIC DNA]</scope>
    <source>
        <strain>ATCC BAA-334 / TIGR4</strain>
    </source>
</reference>
<feature type="chain" id="PRO_0000060094" description="Maltodextrin transport system permease protein MalC">
    <location>
        <begin position="1"/>
        <end position="435"/>
    </location>
</feature>
<feature type="transmembrane region" description="Helical" evidence="1">
    <location>
        <begin position="34"/>
        <end position="54"/>
    </location>
</feature>
<feature type="transmembrane region" description="Helical" evidence="1">
    <location>
        <begin position="73"/>
        <end position="93"/>
    </location>
</feature>
<feature type="transmembrane region" description="Helical" evidence="1">
    <location>
        <begin position="130"/>
        <end position="150"/>
    </location>
</feature>
<feature type="transmembrane region" description="Helical" evidence="1">
    <location>
        <begin position="199"/>
        <end position="219"/>
    </location>
</feature>
<feature type="transmembrane region" description="Helical" evidence="1">
    <location>
        <begin position="230"/>
        <end position="250"/>
    </location>
</feature>
<feature type="transmembrane region" description="Helical" evidence="1">
    <location>
        <begin position="263"/>
        <end position="283"/>
    </location>
</feature>
<feature type="transmembrane region" description="Helical" evidence="1">
    <location>
        <begin position="294"/>
        <end position="314"/>
    </location>
</feature>
<feature type="transmembrane region" description="Helical" evidence="1">
    <location>
        <begin position="338"/>
        <end position="358"/>
    </location>
</feature>
<feature type="transmembrane region" description="Helical" evidence="1">
    <location>
        <begin position="371"/>
        <end position="391"/>
    </location>
</feature>
<feature type="transmembrane region" description="Helical" evidence="1">
    <location>
        <begin position="404"/>
        <end position="424"/>
    </location>
</feature>
<feature type="domain" description="ABC transmembrane type-1" evidence="1">
    <location>
        <begin position="195"/>
        <end position="423"/>
    </location>
</feature>
<feature type="sequence conflict" description="In Ref. 1; AAA26926." evidence="2" ref="1">
    <original>LLPW</original>
    <variation>PSSL</variation>
    <location>
        <begin position="236"/>
        <end position="239"/>
    </location>
</feature>
<feature type="sequence conflict" description="In Ref. 1; AAA26926." evidence="2" ref="1">
    <original>D</original>
    <variation>E</variation>
    <location>
        <position position="434"/>
    </location>
</feature>
<gene>
    <name type="primary">malC</name>
    <name type="ordered locus">SP_2109</name>
</gene>